<gene>
    <name evidence="1" type="primary">glgC</name>
    <name type="ordered locus">Fnod_1505</name>
</gene>
<keyword id="KW-0067">ATP-binding</keyword>
<keyword id="KW-0119">Carbohydrate metabolism</keyword>
<keyword id="KW-0320">Glycogen biosynthesis</keyword>
<keyword id="KW-0321">Glycogen metabolism</keyword>
<keyword id="KW-0547">Nucleotide-binding</keyword>
<keyword id="KW-0548">Nucleotidyltransferase</keyword>
<keyword id="KW-1185">Reference proteome</keyword>
<keyword id="KW-0808">Transferase</keyword>
<feature type="chain" id="PRO_1000072657" description="Glucose-1-phosphate adenylyltransferase">
    <location>
        <begin position="1"/>
        <end position="415"/>
    </location>
</feature>
<feature type="binding site" evidence="1">
    <location>
        <position position="98"/>
    </location>
    <ligand>
        <name>alpha-D-glucose 1-phosphate</name>
        <dbReference type="ChEBI" id="CHEBI:58601"/>
    </ligand>
</feature>
<feature type="binding site" evidence="1">
    <location>
        <position position="163"/>
    </location>
    <ligand>
        <name>alpha-D-glucose 1-phosphate</name>
        <dbReference type="ChEBI" id="CHEBI:58601"/>
    </ligand>
</feature>
<feature type="binding site" evidence="1">
    <location>
        <begin position="178"/>
        <end position="179"/>
    </location>
    <ligand>
        <name>alpha-D-glucose 1-phosphate</name>
        <dbReference type="ChEBI" id="CHEBI:58601"/>
    </ligand>
</feature>
<feature type="binding site" evidence="1">
    <location>
        <position position="189"/>
    </location>
    <ligand>
        <name>alpha-D-glucose 1-phosphate</name>
        <dbReference type="ChEBI" id="CHEBI:58601"/>
    </ligand>
</feature>
<dbReference type="EC" id="2.7.7.27" evidence="1"/>
<dbReference type="EMBL" id="CP000771">
    <property type="protein sequence ID" value="ABS61348.1"/>
    <property type="molecule type" value="Genomic_DNA"/>
</dbReference>
<dbReference type="RefSeq" id="WP_011994653.1">
    <property type="nucleotide sequence ID" value="NC_009718.1"/>
</dbReference>
<dbReference type="SMR" id="A7HN65"/>
<dbReference type="STRING" id="381764.Fnod_1505"/>
<dbReference type="KEGG" id="fno:Fnod_1505"/>
<dbReference type="eggNOG" id="COG0448">
    <property type="taxonomic scope" value="Bacteria"/>
</dbReference>
<dbReference type="HOGENOM" id="CLU_029499_14_0_0"/>
<dbReference type="OrthoDB" id="9801810at2"/>
<dbReference type="UniPathway" id="UPA00164"/>
<dbReference type="Proteomes" id="UP000002415">
    <property type="component" value="Chromosome"/>
</dbReference>
<dbReference type="GO" id="GO:0005524">
    <property type="term" value="F:ATP binding"/>
    <property type="evidence" value="ECO:0007669"/>
    <property type="project" value="UniProtKB-KW"/>
</dbReference>
<dbReference type="GO" id="GO:0008878">
    <property type="term" value="F:glucose-1-phosphate adenylyltransferase activity"/>
    <property type="evidence" value="ECO:0007669"/>
    <property type="project" value="UniProtKB-UniRule"/>
</dbReference>
<dbReference type="GO" id="GO:0005978">
    <property type="term" value="P:glycogen biosynthetic process"/>
    <property type="evidence" value="ECO:0007669"/>
    <property type="project" value="UniProtKB-UniRule"/>
</dbReference>
<dbReference type="CDD" id="cd02508">
    <property type="entry name" value="ADP_Glucose_PP"/>
    <property type="match status" value="1"/>
</dbReference>
<dbReference type="CDD" id="cd04651">
    <property type="entry name" value="LbH_G1P_AT_C"/>
    <property type="match status" value="1"/>
</dbReference>
<dbReference type="Gene3D" id="2.160.10.10">
    <property type="entry name" value="Hexapeptide repeat proteins"/>
    <property type="match status" value="1"/>
</dbReference>
<dbReference type="Gene3D" id="3.90.550.10">
    <property type="entry name" value="Spore Coat Polysaccharide Biosynthesis Protein SpsA, Chain A"/>
    <property type="match status" value="1"/>
</dbReference>
<dbReference type="HAMAP" id="MF_00624">
    <property type="entry name" value="GlgC"/>
    <property type="match status" value="1"/>
</dbReference>
<dbReference type="InterPro" id="IPR011831">
    <property type="entry name" value="ADP-Glc_PPase"/>
</dbReference>
<dbReference type="InterPro" id="IPR005836">
    <property type="entry name" value="ADP_Glu_pyroP_CS"/>
</dbReference>
<dbReference type="InterPro" id="IPR023049">
    <property type="entry name" value="GlgC_bac"/>
</dbReference>
<dbReference type="InterPro" id="IPR056818">
    <property type="entry name" value="GlmU/GlgC-like_hexapep"/>
</dbReference>
<dbReference type="InterPro" id="IPR005835">
    <property type="entry name" value="NTP_transferase_dom"/>
</dbReference>
<dbReference type="InterPro" id="IPR029044">
    <property type="entry name" value="Nucleotide-diphossugar_trans"/>
</dbReference>
<dbReference type="InterPro" id="IPR011004">
    <property type="entry name" value="Trimer_LpxA-like_sf"/>
</dbReference>
<dbReference type="NCBIfam" id="TIGR02091">
    <property type="entry name" value="glgC"/>
    <property type="match status" value="1"/>
</dbReference>
<dbReference type="NCBIfam" id="NF003670">
    <property type="entry name" value="PRK05293.1"/>
    <property type="match status" value="1"/>
</dbReference>
<dbReference type="PANTHER" id="PTHR43523:SF2">
    <property type="entry name" value="GLUCOSE-1-PHOSPHATE ADENYLYLTRANSFERASE"/>
    <property type="match status" value="1"/>
</dbReference>
<dbReference type="PANTHER" id="PTHR43523">
    <property type="entry name" value="GLUCOSE-1-PHOSPHATE ADENYLYLTRANSFERASE-RELATED"/>
    <property type="match status" value="1"/>
</dbReference>
<dbReference type="Pfam" id="PF24894">
    <property type="entry name" value="Hexapep_GlmU"/>
    <property type="match status" value="1"/>
</dbReference>
<dbReference type="Pfam" id="PF00483">
    <property type="entry name" value="NTP_transferase"/>
    <property type="match status" value="1"/>
</dbReference>
<dbReference type="SUPFAM" id="SSF53448">
    <property type="entry name" value="Nucleotide-diphospho-sugar transferases"/>
    <property type="match status" value="1"/>
</dbReference>
<dbReference type="SUPFAM" id="SSF51161">
    <property type="entry name" value="Trimeric LpxA-like enzymes"/>
    <property type="match status" value="1"/>
</dbReference>
<dbReference type="PROSITE" id="PS00809">
    <property type="entry name" value="ADP_GLC_PYROPHOSPH_2"/>
    <property type="match status" value="1"/>
</dbReference>
<accession>A7HN65</accession>
<reference key="1">
    <citation type="submission" date="2007-07" db="EMBL/GenBank/DDBJ databases">
        <title>Complete sequence of Fervidobacterium nodosum Rt17-B1.</title>
        <authorList>
            <consortium name="US DOE Joint Genome Institute"/>
            <person name="Copeland A."/>
            <person name="Lucas S."/>
            <person name="Lapidus A."/>
            <person name="Barry K."/>
            <person name="Glavina del Rio T."/>
            <person name="Dalin E."/>
            <person name="Tice H."/>
            <person name="Pitluck S."/>
            <person name="Saunders E."/>
            <person name="Brettin T."/>
            <person name="Bruce D."/>
            <person name="Detter J.C."/>
            <person name="Han C."/>
            <person name="Schmutz J."/>
            <person name="Larimer F."/>
            <person name="Land M."/>
            <person name="Hauser L."/>
            <person name="Kyrpides N."/>
            <person name="Mikhailova N."/>
            <person name="Nelson K."/>
            <person name="Gogarten J.P."/>
            <person name="Noll K."/>
            <person name="Richardson P."/>
        </authorList>
    </citation>
    <scope>NUCLEOTIDE SEQUENCE [LARGE SCALE GENOMIC DNA]</scope>
    <source>
        <strain>ATCC 35602 / DSM 5306 / Rt17-B1</strain>
    </source>
</reference>
<proteinExistence type="inferred from homology"/>
<organism>
    <name type="scientific">Fervidobacterium nodosum (strain ATCC 35602 / DSM 5306 / Rt17-B1)</name>
    <dbReference type="NCBI Taxonomy" id="381764"/>
    <lineage>
        <taxon>Bacteria</taxon>
        <taxon>Thermotogati</taxon>
        <taxon>Thermotogota</taxon>
        <taxon>Thermotogae</taxon>
        <taxon>Thermotogales</taxon>
        <taxon>Fervidobacteriaceae</taxon>
        <taxon>Fervidobacterium</taxon>
    </lineage>
</organism>
<sequence>MKNVIGLILAGGQGTRLGVLTEKIPKPAVQFGGKYRIIDFTLSNCVNSGIYRIGVLTQYRPHLLNKHIGIGKPWDLDRKGGGVTILQPYSTLTESVWYKGTADAVYQNIEFVDEYNPEYIVVLSGDHIYSMDYSEFVYYHISKGALATIACMEVPITEAHRFGIMVTDIENKIIEFQEKPKNPKSNLASLGIYVFTWNFIKEVLIEDSKDNSSDHDFGKNIIPKILSTGKVYAYPFEGYWQDVGTIQSYWETNLELVRPIPPFNLHDPNWRFYTRSEEMNPAYISENGNVRNSIISEGCEIYGSVENSVISQGVFIDEGAIVKNSVIMTKVEVGKNVIIEDAIIAENTIIKDGCKIGVGHFAESKYDKKVYNSPITVVGMDSIVEENCKIGKNVVIGNDKIVSANTVIDSGGYLI</sequence>
<name>GLGC_FERNB</name>
<protein>
    <recommendedName>
        <fullName evidence="1">Glucose-1-phosphate adenylyltransferase</fullName>
        <ecNumber evidence="1">2.7.7.27</ecNumber>
    </recommendedName>
    <alternativeName>
        <fullName evidence="1">ADP-glucose pyrophosphorylase</fullName>
        <shortName evidence="1">ADPGlc PPase</shortName>
    </alternativeName>
    <alternativeName>
        <fullName evidence="1">ADP-glucose synthase</fullName>
    </alternativeName>
</protein>
<comment type="function">
    <text evidence="1">Involved in the biosynthesis of ADP-glucose, a building block required for the elongation reactions to produce glycogen. Catalyzes the reaction between ATP and alpha-D-glucose 1-phosphate (G1P) to produce pyrophosphate and ADP-Glc.</text>
</comment>
<comment type="catalytic activity">
    <reaction evidence="1">
        <text>alpha-D-glucose 1-phosphate + ATP + H(+) = ADP-alpha-D-glucose + diphosphate</text>
        <dbReference type="Rhea" id="RHEA:12120"/>
        <dbReference type="ChEBI" id="CHEBI:15378"/>
        <dbReference type="ChEBI" id="CHEBI:30616"/>
        <dbReference type="ChEBI" id="CHEBI:33019"/>
        <dbReference type="ChEBI" id="CHEBI:57498"/>
        <dbReference type="ChEBI" id="CHEBI:58601"/>
        <dbReference type="EC" id="2.7.7.27"/>
    </reaction>
</comment>
<comment type="pathway">
    <text evidence="1">Glycan biosynthesis; glycogen biosynthesis.</text>
</comment>
<comment type="subunit">
    <text evidence="1">Homotetramer.</text>
</comment>
<comment type="similarity">
    <text evidence="1">Belongs to the bacterial/plant glucose-1-phosphate adenylyltransferase family.</text>
</comment>
<evidence type="ECO:0000255" key="1">
    <source>
        <dbReference type="HAMAP-Rule" id="MF_00624"/>
    </source>
</evidence>